<gene>
    <name evidence="1" type="primary">miaB</name>
    <name type="ordered locus">PM1001</name>
</gene>
<feature type="chain" id="PRO_0000141747" description="tRNA-2-methylthio-N(6)-dimethylallyladenosine synthase">
    <location>
        <begin position="1"/>
        <end position="474"/>
    </location>
</feature>
<feature type="domain" description="MTTase N-terminal" evidence="1">
    <location>
        <begin position="3"/>
        <end position="120"/>
    </location>
</feature>
<feature type="domain" description="Radical SAM core" evidence="2">
    <location>
        <begin position="143"/>
        <end position="375"/>
    </location>
</feature>
<feature type="domain" description="TRAM" evidence="1">
    <location>
        <begin position="378"/>
        <end position="441"/>
    </location>
</feature>
<feature type="binding site" evidence="1">
    <location>
        <position position="12"/>
    </location>
    <ligand>
        <name>[4Fe-4S] cluster</name>
        <dbReference type="ChEBI" id="CHEBI:49883"/>
        <label>1</label>
    </ligand>
</feature>
<feature type="binding site" evidence="1">
    <location>
        <position position="49"/>
    </location>
    <ligand>
        <name>[4Fe-4S] cluster</name>
        <dbReference type="ChEBI" id="CHEBI:49883"/>
        <label>1</label>
    </ligand>
</feature>
<feature type="binding site" evidence="1">
    <location>
        <position position="83"/>
    </location>
    <ligand>
        <name>[4Fe-4S] cluster</name>
        <dbReference type="ChEBI" id="CHEBI:49883"/>
        <label>1</label>
    </ligand>
</feature>
<feature type="binding site" evidence="1">
    <location>
        <position position="157"/>
    </location>
    <ligand>
        <name>[4Fe-4S] cluster</name>
        <dbReference type="ChEBI" id="CHEBI:49883"/>
        <label>2</label>
        <note>4Fe-4S-S-AdoMet</note>
    </ligand>
</feature>
<feature type="binding site" evidence="1">
    <location>
        <position position="161"/>
    </location>
    <ligand>
        <name>[4Fe-4S] cluster</name>
        <dbReference type="ChEBI" id="CHEBI:49883"/>
        <label>2</label>
        <note>4Fe-4S-S-AdoMet</note>
    </ligand>
</feature>
<feature type="binding site" evidence="1">
    <location>
        <position position="164"/>
    </location>
    <ligand>
        <name>[4Fe-4S] cluster</name>
        <dbReference type="ChEBI" id="CHEBI:49883"/>
        <label>2</label>
        <note>4Fe-4S-S-AdoMet</note>
    </ligand>
</feature>
<dbReference type="EC" id="2.8.4.3" evidence="1"/>
<dbReference type="EMBL" id="AF237940">
    <property type="protein sequence ID" value="AAF68426.1"/>
    <property type="molecule type" value="Genomic_DNA"/>
</dbReference>
<dbReference type="EMBL" id="AE004439">
    <property type="protein sequence ID" value="AAK03085.1"/>
    <property type="molecule type" value="Genomic_DNA"/>
</dbReference>
<dbReference type="RefSeq" id="WP_005717221.1">
    <property type="nucleotide sequence ID" value="NC_002663.1"/>
</dbReference>
<dbReference type="SMR" id="Q9L699"/>
<dbReference type="STRING" id="272843.PM1001"/>
<dbReference type="EnsemblBacteria" id="AAK03085">
    <property type="protein sequence ID" value="AAK03085"/>
    <property type="gene ID" value="PM1001"/>
</dbReference>
<dbReference type="GeneID" id="77206316"/>
<dbReference type="KEGG" id="pmu:PM1001"/>
<dbReference type="HOGENOM" id="CLU_018697_2_0_6"/>
<dbReference type="OrthoDB" id="9805215at2"/>
<dbReference type="Proteomes" id="UP000000809">
    <property type="component" value="Chromosome"/>
</dbReference>
<dbReference type="GO" id="GO:0005829">
    <property type="term" value="C:cytosol"/>
    <property type="evidence" value="ECO:0007669"/>
    <property type="project" value="TreeGrafter"/>
</dbReference>
<dbReference type="GO" id="GO:0051539">
    <property type="term" value="F:4 iron, 4 sulfur cluster binding"/>
    <property type="evidence" value="ECO:0007669"/>
    <property type="project" value="UniProtKB-UniRule"/>
</dbReference>
<dbReference type="GO" id="GO:0046872">
    <property type="term" value="F:metal ion binding"/>
    <property type="evidence" value="ECO:0007669"/>
    <property type="project" value="UniProtKB-KW"/>
</dbReference>
<dbReference type="GO" id="GO:0035597">
    <property type="term" value="F:N6-isopentenyladenosine methylthiotransferase activity"/>
    <property type="evidence" value="ECO:0007669"/>
    <property type="project" value="TreeGrafter"/>
</dbReference>
<dbReference type="CDD" id="cd01335">
    <property type="entry name" value="Radical_SAM"/>
    <property type="match status" value="1"/>
</dbReference>
<dbReference type="FunFam" id="3.40.50.12160:FF:000001">
    <property type="entry name" value="tRNA-2-methylthio-N(6)-dimethylallyladenosine synthase"/>
    <property type="match status" value="1"/>
</dbReference>
<dbReference type="FunFam" id="3.80.30.20:FF:000001">
    <property type="entry name" value="tRNA-2-methylthio-N(6)-dimethylallyladenosine synthase 2"/>
    <property type="match status" value="1"/>
</dbReference>
<dbReference type="Gene3D" id="3.40.50.12160">
    <property type="entry name" value="Methylthiotransferase, N-terminal domain"/>
    <property type="match status" value="1"/>
</dbReference>
<dbReference type="Gene3D" id="3.80.30.20">
    <property type="entry name" value="tm_1862 like domain"/>
    <property type="match status" value="1"/>
</dbReference>
<dbReference type="HAMAP" id="MF_01864">
    <property type="entry name" value="tRNA_metthiotr_MiaB"/>
    <property type="match status" value="1"/>
</dbReference>
<dbReference type="InterPro" id="IPR006638">
    <property type="entry name" value="Elp3/MiaA/NifB-like_rSAM"/>
</dbReference>
<dbReference type="InterPro" id="IPR005839">
    <property type="entry name" value="Methylthiotransferase"/>
</dbReference>
<dbReference type="InterPro" id="IPR020612">
    <property type="entry name" value="Methylthiotransferase_CS"/>
</dbReference>
<dbReference type="InterPro" id="IPR013848">
    <property type="entry name" value="Methylthiotransferase_N"/>
</dbReference>
<dbReference type="InterPro" id="IPR038135">
    <property type="entry name" value="Methylthiotransferase_N_sf"/>
</dbReference>
<dbReference type="InterPro" id="IPR006463">
    <property type="entry name" value="MiaB_methiolase"/>
</dbReference>
<dbReference type="InterPro" id="IPR007197">
    <property type="entry name" value="rSAM"/>
</dbReference>
<dbReference type="InterPro" id="IPR023404">
    <property type="entry name" value="rSAM_horseshoe"/>
</dbReference>
<dbReference type="InterPro" id="IPR002792">
    <property type="entry name" value="TRAM_dom"/>
</dbReference>
<dbReference type="NCBIfam" id="TIGR01574">
    <property type="entry name" value="miaB-methiolase"/>
    <property type="match status" value="1"/>
</dbReference>
<dbReference type="NCBIfam" id="TIGR00089">
    <property type="entry name" value="MiaB/RimO family radical SAM methylthiotransferase"/>
    <property type="match status" value="1"/>
</dbReference>
<dbReference type="PANTHER" id="PTHR43020">
    <property type="entry name" value="CDK5 REGULATORY SUBUNIT-ASSOCIATED PROTEIN 1"/>
    <property type="match status" value="1"/>
</dbReference>
<dbReference type="PANTHER" id="PTHR43020:SF2">
    <property type="entry name" value="MITOCHONDRIAL TRNA METHYLTHIOTRANSFERASE CDK5RAP1"/>
    <property type="match status" value="1"/>
</dbReference>
<dbReference type="Pfam" id="PF04055">
    <property type="entry name" value="Radical_SAM"/>
    <property type="match status" value="1"/>
</dbReference>
<dbReference type="Pfam" id="PF01938">
    <property type="entry name" value="TRAM"/>
    <property type="match status" value="1"/>
</dbReference>
<dbReference type="Pfam" id="PF00919">
    <property type="entry name" value="UPF0004"/>
    <property type="match status" value="1"/>
</dbReference>
<dbReference type="SFLD" id="SFLDF00273">
    <property type="entry name" value="(dimethylallyl)adenosine_tRNA"/>
    <property type="match status" value="1"/>
</dbReference>
<dbReference type="SFLD" id="SFLDG01082">
    <property type="entry name" value="B12-binding_domain_containing"/>
    <property type="match status" value="1"/>
</dbReference>
<dbReference type="SFLD" id="SFLDG01061">
    <property type="entry name" value="methylthiotransferase"/>
    <property type="match status" value="1"/>
</dbReference>
<dbReference type="SMART" id="SM00729">
    <property type="entry name" value="Elp3"/>
    <property type="match status" value="1"/>
</dbReference>
<dbReference type="SUPFAM" id="SSF102114">
    <property type="entry name" value="Radical SAM enzymes"/>
    <property type="match status" value="1"/>
</dbReference>
<dbReference type="PROSITE" id="PS51449">
    <property type="entry name" value="MTTASE_N"/>
    <property type="match status" value="1"/>
</dbReference>
<dbReference type="PROSITE" id="PS01278">
    <property type="entry name" value="MTTASE_RADICAL"/>
    <property type="match status" value="1"/>
</dbReference>
<dbReference type="PROSITE" id="PS51918">
    <property type="entry name" value="RADICAL_SAM"/>
    <property type="match status" value="1"/>
</dbReference>
<dbReference type="PROSITE" id="PS50926">
    <property type="entry name" value="TRAM"/>
    <property type="match status" value="1"/>
</dbReference>
<protein>
    <recommendedName>
        <fullName evidence="1">tRNA-2-methylthio-N(6)-dimethylallyladenosine synthase</fullName>
        <ecNumber evidence="1">2.8.4.3</ecNumber>
    </recommendedName>
    <alternativeName>
        <fullName evidence="1">(Dimethylallyl)adenosine tRNA methylthiotransferase MiaB</fullName>
    </alternativeName>
    <alternativeName>
        <fullName evidence="1">tRNA-i(6)A37 methylthiotransferase</fullName>
    </alternativeName>
</protein>
<name>MIAB_PASMU</name>
<keyword id="KW-0004">4Fe-4S</keyword>
<keyword id="KW-0963">Cytoplasm</keyword>
<keyword id="KW-0408">Iron</keyword>
<keyword id="KW-0411">Iron-sulfur</keyword>
<keyword id="KW-0479">Metal-binding</keyword>
<keyword id="KW-1185">Reference proteome</keyword>
<keyword id="KW-0949">S-adenosyl-L-methionine</keyword>
<keyword id="KW-0808">Transferase</keyword>
<keyword id="KW-0819">tRNA processing</keyword>
<reference key="1">
    <citation type="journal article" date="2000" name="Microb. Pathog.">
        <title>Identification of Pasteurella multocida virulence genes in a septicemic mouse model using signature-tagged mutagenesis.</title>
        <authorList>
            <person name="Fuller T.E."/>
            <person name="Kennedy M.J."/>
            <person name="Lowery D.E."/>
        </authorList>
    </citation>
    <scope>NUCLEOTIDE SEQUENCE [GENOMIC DNA]</scope>
</reference>
<reference key="2">
    <citation type="journal article" date="2001" name="Proc. Natl. Acad. Sci. U.S.A.">
        <title>Complete genomic sequence of Pasteurella multocida Pm70.</title>
        <authorList>
            <person name="May B.J."/>
            <person name="Zhang Q."/>
            <person name="Li L.L."/>
            <person name="Paustian M.L."/>
            <person name="Whittam T.S."/>
            <person name="Kapur V."/>
        </authorList>
    </citation>
    <scope>NUCLEOTIDE SEQUENCE [LARGE SCALE GENOMIC DNA]</scope>
    <source>
        <strain>Pm70</strain>
    </source>
</reference>
<accession>Q9L699</accession>
<evidence type="ECO:0000255" key="1">
    <source>
        <dbReference type="HAMAP-Rule" id="MF_01864"/>
    </source>
</evidence>
<evidence type="ECO:0000255" key="2">
    <source>
        <dbReference type="PROSITE-ProRule" id="PRU01266"/>
    </source>
</evidence>
<organism>
    <name type="scientific">Pasteurella multocida (strain Pm70)</name>
    <dbReference type="NCBI Taxonomy" id="272843"/>
    <lineage>
        <taxon>Bacteria</taxon>
        <taxon>Pseudomonadati</taxon>
        <taxon>Pseudomonadota</taxon>
        <taxon>Gammaproteobacteria</taxon>
        <taxon>Pasteurellales</taxon>
        <taxon>Pasteurellaceae</taxon>
        <taxon>Pasteurella</taxon>
    </lineage>
</organism>
<comment type="function">
    <text evidence="1">Catalyzes the methylthiolation of N6-(dimethylallyl)adenosine (i(6)A), leading to the formation of 2-methylthio-N6-(dimethylallyl)adenosine (ms(2)i(6)A) at position 37 in tRNAs that read codons beginning with uridine.</text>
</comment>
<comment type="catalytic activity">
    <reaction evidence="1">
        <text>N(6)-dimethylallyladenosine(37) in tRNA + (sulfur carrier)-SH + AH2 + 2 S-adenosyl-L-methionine = 2-methylsulfanyl-N(6)-dimethylallyladenosine(37) in tRNA + (sulfur carrier)-H + 5'-deoxyadenosine + L-methionine + A + S-adenosyl-L-homocysteine + 2 H(+)</text>
        <dbReference type="Rhea" id="RHEA:37067"/>
        <dbReference type="Rhea" id="RHEA-COMP:10375"/>
        <dbReference type="Rhea" id="RHEA-COMP:10376"/>
        <dbReference type="Rhea" id="RHEA-COMP:14737"/>
        <dbReference type="Rhea" id="RHEA-COMP:14739"/>
        <dbReference type="ChEBI" id="CHEBI:13193"/>
        <dbReference type="ChEBI" id="CHEBI:15378"/>
        <dbReference type="ChEBI" id="CHEBI:17319"/>
        <dbReference type="ChEBI" id="CHEBI:17499"/>
        <dbReference type="ChEBI" id="CHEBI:29917"/>
        <dbReference type="ChEBI" id="CHEBI:57844"/>
        <dbReference type="ChEBI" id="CHEBI:57856"/>
        <dbReference type="ChEBI" id="CHEBI:59789"/>
        <dbReference type="ChEBI" id="CHEBI:64428"/>
        <dbReference type="ChEBI" id="CHEBI:74415"/>
        <dbReference type="ChEBI" id="CHEBI:74417"/>
        <dbReference type="EC" id="2.8.4.3"/>
    </reaction>
</comment>
<comment type="cofactor">
    <cofactor evidence="1">
        <name>[4Fe-4S] cluster</name>
        <dbReference type="ChEBI" id="CHEBI:49883"/>
    </cofactor>
    <text evidence="1">Binds 2 [4Fe-4S] clusters. One cluster is coordinated with 3 cysteines and an exchangeable S-adenosyl-L-methionine.</text>
</comment>
<comment type="subunit">
    <text evidence="1">Monomer.</text>
</comment>
<comment type="subcellular location">
    <subcellularLocation>
        <location evidence="1">Cytoplasm</location>
    </subcellularLocation>
</comment>
<comment type="similarity">
    <text evidence="1">Belongs to the methylthiotransferase family. MiaB subfamily.</text>
</comment>
<sequence length="474" mass="53553">MTQKLHIKTWGCQMNEYDSSKMADLLNSTHGLELTEIPEEADVLLLNTCSIREKAQEKVFHQLGRWKELKKHKPGLVIGVGGCVASQEGEHIRTRAPYVDIIFGPQTLHRLPEMINQIRGGKSSVVDVSFPEIEKFDRLPEPRAEGPTAFVSIMEGCNKYCSFCVVPYTRGEEVSRPVDDVLFEIAQLAEQGVREVNLLGQNVNAYRGATHDDGICTFAELLRLVAAIDGIDRLRFTTSHPIEFTDDIIDVYRDTPELVSFLHLPVQSGSDRVLSMMKRNHTALEYKSIIRKLRAVRPEIQISSDFIVGFPGETAEDFEQTMNLIAQVNFDMSFSFIYSARPGTPAADMPDDVTEEEKKQRLYVLQQRINNQAAQFSRAMLGTEQRVLVEGPSKKDLMELTGRTETNRIVNFVGTPDMIGKFVDIKITDVFTNSLRGEVVRTEEQMGLRVVQSPQMVINRTRKEDELGVGRYHA</sequence>
<proteinExistence type="inferred from homology"/>